<proteinExistence type="inferred from homology"/>
<gene>
    <name evidence="3" type="ORF">BcepMu39</name>
</gene>
<organism>
    <name type="scientific">Burkholderia phage BcepMu (isolate -/United States/Summer/2002)</name>
    <name type="common">Bacteriophage BcepMu</name>
    <dbReference type="NCBI Taxonomy" id="1283335"/>
    <lineage>
        <taxon>Viruses</taxon>
        <taxon>Duplodnaviria</taxon>
        <taxon>Heunggongvirae</taxon>
        <taxon>Uroviricota</taxon>
        <taxon>Caudoviricetes</taxon>
        <taxon>Bcepmuvirus</taxon>
        <taxon>Bcepmuvirus bcepMu</taxon>
    </lineage>
</organism>
<protein>
    <recommendedName>
        <fullName>Tail sheath protein</fullName>
        <shortName>TSP</shortName>
    </recommendedName>
</protein>
<dbReference type="EMBL" id="AY539836">
    <property type="protein sequence ID" value="AAS47878.1"/>
    <property type="molecule type" value="Genomic_DNA"/>
</dbReference>
<dbReference type="RefSeq" id="YP_024712.1">
    <property type="nucleotide sequence ID" value="NC_005882.1"/>
</dbReference>
<dbReference type="SMR" id="Q6QIB0"/>
<dbReference type="GeneID" id="2845953"/>
<dbReference type="KEGG" id="vg:2845953"/>
<dbReference type="Proteomes" id="UP000011237">
    <property type="component" value="Segment"/>
</dbReference>
<dbReference type="GO" id="GO:0030430">
    <property type="term" value="C:host cell cytoplasm"/>
    <property type="evidence" value="ECO:0007669"/>
    <property type="project" value="UniProtKB-SubCell"/>
</dbReference>
<dbReference type="GO" id="GO:0098027">
    <property type="term" value="C:virus tail, sheath"/>
    <property type="evidence" value="ECO:0007669"/>
    <property type="project" value="UniProtKB-KW"/>
</dbReference>
<dbReference type="GO" id="GO:0099000">
    <property type="term" value="P:symbiont genome ejection through host cell envelope, contractile tail mechanism"/>
    <property type="evidence" value="ECO:0007669"/>
    <property type="project" value="UniProtKB-KW"/>
</dbReference>
<dbReference type="Gene3D" id="3.40.50.11780">
    <property type="match status" value="1"/>
</dbReference>
<dbReference type="InterPro" id="IPR035089">
    <property type="entry name" value="Phage_sheath_subtilisin"/>
</dbReference>
<dbReference type="InterPro" id="IPR052042">
    <property type="entry name" value="Phage_Tail_Sheath_Structural"/>
</dbReference>
<dbReference type="InterPro" id="IPR020287">
    <property type="entry name" value="Tail_sheath_C"/>
</dbReference>
<dbReference type="PANTHER" id="PTHR35861">
    <property type="match status" value="1"/>
</dbReference>
<dbReference type="PANTHER" id="PTHR35861:SF1">
    <property type="entry name" value="PHAGE TAIL SHEATH PROTEIN"/>
    <property type="match status" value="1"/>
</dbReference>
<dbReference type="Pfam" id="PF04984">
    <property type="entry name" value="Phage_sheath_1"/>
    <property type="match status" value="1"/>
</dbReference>
<dbReference type="Pfam" id="PF17482">
    <property type="entry name" value="Phage_sheath_1C"/>
    <property type="match status" value="1"/>
</dbReference>
<organismHost>
    <name type="scientific">Burkholderia cenocepacia (strain ATCC BAA-245 / DSM 16553 / LMG 16656 / NCTC 13227 / J2315 / CF5610)</name>
    <name type="common">Burkholderia cepacia (strain J2315)</name>
    <dbReference type="NCBI Taxonomy" id="216591"/>
</organismHost>
<sequence length="477" mass="50927">MAANYLHGVETIEKETGSRPVKVVKSAVIGLIGTAPIGPVNTPVQSLSDVDAAQFGPQLAGFTIPQALDAVYDYGSGTVIVINVLDPAVHKSNAANEPVTFDAATGRAKLAHPAAANLVLKNDSGGTTYAEGTDYAVDLINGVITRIKTGTIPPGATAAKATYDYADPTKVTAADIIGAVNAAGMRTGMKALKDTYNLYGYFSKILIAPAYCTQNSVSVELEAMAVQLGAIAYIDAPIGTTLAQALAGRGPAGTINFNTSSDRVRLCYPHVKVYDTATNAERLEPLSSRAAGLRARVDLDKGYWWSSSNQQLVGVTGVERPLSAMIDDPQSDVNMLNEQGITTVFSSYGSGLRLWGNRTAAWPTVTHMRNFENVRRTGDVINESLRYFSQQFVDAPIDQGLIDSLVESVNGFGRKLIGDGALLGFKAWFDPARNPKEELAAGHLLINYKYTVPPPLERLTYETEITSEYLLTLKGGN</sequence>
<feature type="chain" id="PRO_0000432775" description="Tail sheath protein">
    <location>
        <begin position="1"/>
        <end position="477"/>
    </location>
</feature>
<evidence type="ECO:0000250" key="1">
    <source>
        <dbReference type="UniProtKB" id="P79678"/>
    </source>
</evidence>
<evidence type="ECO:0000305" key="2"/>
<evidence type="ECO:0000312" key="3">
    <source>
        <dbReference type="EMBL" id="AAS47878.1"/>
    </source>
</evidence>
<evidence type="ECO:0000312" key="4">
    <source>
        <dbReference type="Proteomes" id="UP000011237"/>
    </source>
</evidence>
<name>TSP_BPBMU</name>
<accession>Q6QIB0</accession>
<reference key="1">
    <citation type="journal article" date="2004" name="J. Mol. Biol.">
        <title>Burkholderia cenocepacia phage BcepMu and a family of Mu-like phages encoding potential pathogenesis factors.</title>
        <authorList>
            <person name="Summer E.J."/>
            <person name="Gonzalez C.F."/>
            <person name="Carlisle T."/>
            <person name="Mebane L.M."/>
            <person name="Cass A.M."/>
            <person name="Savva C.G."/>
            <person name="LiPuma J."/>
            <person name="Young R."/>
        </authorList>
    </citation>
    <scope>NUCLEOTIDE SEQUENCE [LARGE SCALE GENOMIC DNA]</scope>
    <source>
        <strain evidence="4">Isolate -/United States/Summer/2002</strain>
    </source>
</reference>
<comment type="function">
    <text evidence="1">Polymerizes as an extended structure around the baseplate-tail tube complex. During ejection, the sheath shifts to a contracted form, thereby making the inner tail tube protrude through the host cell envelope.</text>
</comment>
<comment type="subunit">
    <text evidence="1">Homomultimer.</text>
</comment>
<comment type="subcellular location">
    <subcellularLocation>
        <location evidence="1">Virion</location>
    </subcellularLocation>
    <subcellularLocation>
        <location evidence="1">Host cytoplasm</location>
    </subcellularLocation>
    <text evidence="1">Tail.</text>
</comment>
<comment type="similarity">
    <text evidence="2">Belongs to the myoviridae tail sheath protein family.</text>
</comment>
<keyword id="KW-1035">Host cytoplasm</keyword>
<keyword id="KW-1185">Reference proteome</keyword>
<keyword id="KW-1242">Viral contractile tail ejection system</keyword>
<keyword id="KW-1171">Viral genome ejection through host cell envelope</keyword>
<keyword id="KW-1162">Viral penetration into host cytoplasm</keyword>
<keyword id="KW-1227">Viral tail protein</keyword>
<keyword id="KW-1229">Viral tail sheath protein</keyword>
<keyword id="KW-0946">Virion</keyword>
<keyword id="KW-1160">Virus entry into host cell</keyword>